<dbReference type="EMBL" id="CP001339">
    <property type="protein sequence ID" value="ACL73392.1"/>
    <property type="molecule type" value="Genomic_DNA"/>
</dbReference>
<dbReference type="RefSeq" id="WP_012638868.1">
    <property type="nucleotide sequence ID" value="NC_011901.1"/>
</dbReference>
<dbReference type="SMR" id="B8GV46"/>
<dbReference type="STRING" id="396588.Tgr7_2312"/>
<dbReference type="KEGG" id="tgr:Tgr7_2312"/>
<dbReference type="eggNOG" id="COG0094">
    <property type="taxonomic scope" value="Bacteria"/>
</dbReference>
<dbReference type="HOGENOM" id="CLU_061015_2_1_6"/>
<dbReference type="OrthoDB" id="9806626at2"/>
<dbReference type="Proteomes" id="UP000002383">
    <property type="component" value="Chromosome"/>
</dbReference>
<dbReference type="GO" id="GO:1990904">
    <property type="term" value="C:ribonucleoprotein complex"/>
    <property type="evidence" value="ECO:0007669"/>
    <property type="project" value="UniProtKB-KW"/>
</dbReference>
<dbReference type="GO" id="GO:0005840">
    <property type="term" value="C:ribosome"/>
    <property type="evidence" value="ECO:0007669"/>
    <property type="project" value="UniProtKB-KW"/>
</dbReference>
<dbReference type="GO" id="GO:0019843">
    <property type="term" value="F:rRNA binding"/>
    <property type="evidence" value="ECO:0007669"/>
    <property type="project" value="UniProtKB-UniRule"/>
</dbReference>
<dbReference type="GO" id="GO:0003735">
    <property type="term" value="F:structural constituent of ribosome"/>
    <property type="evidence" value="ECO:0007669"/>
    <property type="project" value="InterPro"/>
</dbReference>
<dbReference type="GO" id="GO:0000049">
    <property type="term" value="F:tRNA binding"/>
    <property type="evidence" value="ECO:0007669"/>
    <property type="project" value="UniProtKB-UniRule"/>
</dbReference>
<dbReference type="GO" id="GO:0006412">
    <property type="term" value="P:translation"/>
    <property type="evidence" value="ECO:0007669"/>
    <property type="project" value="UniProtKB-UniRule"/>
</dbReference>
<dbReference type="FunFam" id="3.30.1440.10:FF:000001">
    <property type="entry name" value="50S ribosomal protein L5"/>
    <property type="match status" value="1"/>
</dbReference>
<dbReference type="Gene3D" id="3.30.1440.10">
    <property type="match status" value="1"/>
</dbReference>
<dbReference type="HAMAP" id="MF_01333_B">
    <property type="entry name" value="Ribosomal_uL5_B"/>
    <property type="match status" value="1"/>
</dbReference>
<dbReference type="InterPro" id="IPR002132">
    <property type="entry name" value="Ribosomal_uL5"/>
</dbReference>
<dbReference type="InterPro" id="IPR020930">
    <property type="entry name" value="Ribosomal_uL5_bac-type"/>
</dbReference>
<dbReference type="InterPro" id="IPR031309">
    <property type="entry name" value="Ribosomal_uL5_C"/>
</dbReference>
<dbReference type="InterPro" id="IPR020929">
    <property type="entry name" value="Ribosomal_uL5_CS"/>
</dbReference>
<dbReference type="InterPro" id="IPR022803">
    <property type="entry name" value="Ribosomal_uL5_dom_sf"/>
</dbReference>
<dbReference type="InterPro" id="IPR031310">
    <property type="entry name" value="Ribosomal_uL5_N"/>
</dbReference>
<dbReference type="NCBIfam" id="NF000585">
    <property type="entry name" value="PRK00010.1"/>
    <property type="match status" value="1"/>
</dbReference>
<dbReference type="PANTHER" id="PTHR11994">
    <property type="entry name" value="60S RIBOSOMAL PROTEIN L11-RELATED"/>
    <property type="match status" value="1"/>
</dbReference>
<dbReference type="Pfam" id="PF00281">
    <property type="entry name" value="Ribosomal_L5"/>
    <property type="match status" value="1"/>
</dbReference>
<dbReference type="Pfam" id="PF00673">
    <property type="entry name" value="Ribosomal_L5_C"/>
    <property type="match status" value="1"/>
</dbReference>
<dbReference type="PIRSF" id="PIRSF002161">
    <property type="entry name" value="Ribosomal_L5"/>
    <property type="match status" value="1"/>
</dbReference>
<dbReference type="SUPFAM" id="SSF55282">
    <property type="entry name" value="RL5-like"/>
    <property type="match status" value="1"/>
</dbReference>
<dbReference type="PROSITE" id="PS00358">
    <property type="entry name" value="RIBOSOMAL_L5"/>
    <property type="match status" value="1"/>
</dbReference>
<organism>
    <name type="scientific">Thioalkalivibrio sulfidiphilus (strain HL-EbGR7)</name>
    <dbReference type="NCBI Taxonomy" id="396588"/>
    <lineage>
        <taxon>Bacteria</taxon>
        <taxon>Pseudomonadati</taxon>
        <taxon>Pseudomonadota</taxon>
        <taxon>Gammaproteobacteria</taxon>
        <taxon>Chromatiales</taxon>
        <taxon>Ectothiorhodospiraceae</taxon>
        <taxon>Thioalkalivibrio</taxon>
    </lineage>
</organism>
<accession>B8GV46</accession>
<comment type="function">
    <text evidence="1">This is one of the proteins that bind and probably mediate the attachment of the 5S RNA into the large ribosomal subunit, where it forms part of the central protuberance. In the 70S ribosome it contacts protein S13 of the 30S subunit (bridge B1b), connecting the 2 subunits; this bridge is implicated in subunit movement. Contacts the P site tRNA; the 5S rRNA and some of its associated proteins might help stabilize positioning of ribosome-bound tRNAs.</text>
</comment>
<comment type="subunit">
    <text evidence="1">Part of the 50S ribosomal subunit; part of the 5S rRNA/L5/L18/L25 subcomplex. Contacts the 5S rRNA and the P site tRNA. Forms a bridge to the 30S subunit in the 70S ribosome.</text>
</comment>
<comment type="similarity">
    <text evidence="1">Belongs to the universal ribosomal protein uL5 family.</text>
</comment>
<evidence type="ECO:0000255" key="1">
    <source>
        <dbReference type="HAMAP-Rule" id="MF_01333"/>
    </source>
</evidence>
<evidence type="ECO:0000305" key="2"/>
<proteinExistence type="inferred from homology"/>
<protein>
    <recommendedName>
        <fullName evidence="1">Large ribosomal subunit protein uL5</fullName>
    </recommendedName>
    <alternativeName>
        <fullName evidence="2">50S ribosomal protein L5</fullName>
    </alternativeName>
</protein>
<sequence>MARLKEFYRDTVMKQLMEKFQYSNVMEVPRITKITLNMGLGEAVGDKKIIEHAVSDMTAIAGQKPVVTKARKSIAGFKIRDDYPIGCMVTLRREAMYEFLDRLVNVALPRVRDFRGLNPKGFDGRGNYNMGIKEQIIFPEVDYDKIDALRGMNISITTTAKNDEEARALLSAFSFPFKH</sequence>
<keyword id="KW-1185">Reference proteome</keyword>
<keyword id="KW-0687">Ribonucleoprotein</keyword>
<keyword id="KW-0689">Ribosomal protein</keyword>
<keyword id="KW-0694">RNA-binding</keyword>
<keyword id="KW-0699">rRNA-binding</keyword>
<keyword id="KW-0820">tRNA-binding</keyword>
<name>RL5_THISH</name>
<gene>
    <name evidence="1" type="primary">rplE</name>
    <name type="ordered locus">Tgr7_2312</name>
</gene>
<reference key="1">
    <citation type="journal article" date="2011" name="Stand. Genomic Sci.">
        <title>Complete genome sequence of 'Thioalkalivibrio sulfidophilus' HL-EbGr7.</title>
        <authorList>
            <person name="Muyzer G."/>
            <person name="Sorokin D.Y."/>
            <person name="Mavromatis K."/>
            <person name="Lapidus A."/>
            <person name="Clum A."/>
            <person name="Ivanova N."/>
            <person name="Pati A."/>
            <person name="d'Haeseleer P."/>
            <person name="Woyke T."/>
            <person name="Kyrpides N.C."/>
        </authorList>
    </citation>
    <scope>NUCLEOTIDE SEQUENCE [LARGE SCALE GENOMIC DNA]</scope>
    <source>
        <strain>HL-EbGR7</strain>
    </source>
</reference>
<feature type="chain" id="PRO_1000166156" description="Large ribosomal subunit protein uL5">
    <location>
        <begin position="1"/>
        <end position="179"/>
    </location>
</feature>